<proteinExistence type="inferred from homology"/>
<protein>
    <recommendedName>
        <fullName evidence="2">Translation initiation factor IF-2</fullName>
    </recommendedName>
</protein>
<reference key="1">
    <citation type="journal article" date="2004" name="Proc. Natl. Acad. Sci. U.S.A.">
        <title>Genome sequence of the deep-sea gamma-proteobacterium Idiomarina loihiensis reveals amino acid fermentation as a source of carbon and energy.</title>
        <authorList>
            <person name="Hou S."/>
            <person name="Saw J.H."/>
            <person name="Lee K.S."/>
            <person name="Freitas T.A."/>
            <person name="Belisle C."/>
            <person name="Kawarabayasi Y."/>
            <person name="Donachie S.P."/>
            <person name="Pikina A."/>
            <person name="Galperin M.Y."/>
            <person name="Koonin E.V."/>
            <person name="Makarova K.S."/>
            <person name="Omelchenko M.V."/>
            <person name="Sorokin A."/>
            <person name="Wolf Y.I."/>
            <person name="Li Q.X."/>
            <person name="Keum Y.S."/>
            <person name="Campbell S."/>
            <person name="Denery J."/>
            <person name="Aizawa S."/>
            <person name="Shibata S."/>
            <person name="Malahoff A."/>
            <person name="Alam M."/>
        </authorList>
    </citation>
    <scope>NUCLEOTIDE SEQUENCE [LARGE SCALE GENOMIC DNA]</scope>
    <source>
        <strain>ATCC BAA-735 / DSM 15497 / L2-TR</strain>
    </source>
</reference>
<evidence type="ECO:0000250" key="1"/>
<evidence type="ECO:0000255" key="2">
    <source>
        <dbReference type="HAMAP-Rule" id="MF_00100"/>
    </source>
</evidence>
<evidence type="ECO:0000256" key="3">
    <source>
        <dbReference type="SAM" id="MobiDB-lite"/>
    </source>
</evidence>
<accession>Q5QTY8</accession>
<dbReference type="EMBL" id="AE017340">
    <property type="protein sequence ID" value="AAV81808.1"/>
    <property type="molecule type" value="Genomic_DNA"/>
</dbReference>
<dbReference type="RefSeq" id="WP_011234219.1">
    <property type="nucleotide sequence ID" value="NC_006512.1"/>
</dbReference>
<dbReference type="SMR" id="Q5QTY8"/>
<dbReference type="STRING" id="283942.IL0968"/>
<dbReference type="GeneID" id="41336128"/>
<dbReference type="KEGG" id="ilo:IL0968"/>
<dbReference type="eggNOG" id="COG0532">
    <property type="taxonomic scope" value="Bacteria"/>
</dbReference>
<dbReference type="HOGENOM" id="CLU_006301_6_3_6"/>
<dbReference type="OrthoDB" id="9811804at2"/>
<dbReference type="Proteomes" id="UP000001171">
    <property type="component" value="Chromosome"/>
</dbReference>
<dbReference type="GO" id="GO:0005829">
    <property type="term" value="C:cytosol"/>
    <property type="evidence" value="ECO:0007669"/>
    <property type="project" value="TreeGrafter"/>
</dbReference>
<dbReference type="GO" id="GO:0005525">
    <property type="term" value="F:GTP binding"/>
    <property type="evidence" value="ECO:0007669"/>
    <property type="project" value="UniProtKB-KW"/>
</dbReference>
<dbReference type="GO" id="GO:0003924">
    <property type="term" value="F:GTPase activity"/>
    <property type="evidence" value="ECO:0007669"/>
    <property type="project" value="UniProtKB-UniRule"/>
</dbReference>
<dbReference type="GO" id="GO:0097216">
    <property type="term" value="F:guanosine tetraphosphate binding"/>
    <property type="evidence" value="ECO:0007669"/>
    <property type="project" value="UniProtKB-ARBA"/>
</dbReference>
<dbReference type="GO" id="GO:0003743">
    <property type="term" value="F:translation initiation factor activity"/>
    <property type="evidence" value="ECO:0007669"/>
    <property type="project" value="UniProtKB-UniRule"/>
</dbReference>
<dbReference type="CDD" id="cd01887">
    <property type="entry name" value="IF2_eIF5B"/>
    <property type="match status" value="1"/>
</dbReference>
<dbReference type="CDD" id="cd03702">
    <property type="entry name" value="IF2_mtIF2_II"/>
    <property type="match status" value="1"/>
</dbReference>
<dbReference type="CDD" id="cd03692">
    <property type="entry name" value="mtIF2_IVc"/>
    <property type="match status" value="1"/>
</dbReference>
<dbReference type="FunFam" id="2.40.30.10:FF:000007">
    <property type="entry name" value="Translation initiation factor IF-2"/>
    <property type="match status" value="1"/>
</dbReference>
<dbReference type="FunFam" id="2.40.30.10:FF:000008">
    <property type="entry name" value="Translation initiation factor IF-2"/>
    <property type="match status" value="1"/>
</dbReference>
<dbReference type="FunFam" id="3.40.50.10050:FF:000001">
    <property type="entry name" value="Translation initiation factor IF-2"/>
    <property type="match status" value="1"/>
</dbReference>
<dbReference type="FunFam" id="3.40.50.300:FF:000019">
    <property type="entry name" value="Translation initiation factor IF-2"/>
    <property type="match status" value="1"/>
</dbReference>
<dbReference type="Gene3D" id="3.40.50.300">
    <property type="entry name" value="P-loop containing nucleotide triphosphate hydrolases"/>
    <property type="match status" value="1"/>
</dbReference>
<dbReference type="Gene3D" id="3.30.56.50">
    <property type="entry name" value="Putative DNA-binding domain, N-terminal subdomain of bacterial translation initiation factor IF2"/>
    <property type="match status" value="1"/>
</dbReference>
<dbReference type="Gene3D" id="2.40.30.10">
    <property type="entry name" value="Translation factors"/>
    <property type="match status" value="2"/>
</dbReference>
<dbReference type="Gene3D" id="3.40.50.10050">
    <property type="entry name" value="Translation initiation factor IF- 2, domain 3"/>
    <property type="match status" value="1"/>
</dbReference>
<dbReference type="HAMAP" id="MF_00100_B">
    <property type="entry name" value="IF_2_B"/>
    <property type="match status" value="1"/>
</dbReference>
<dbReference type="InterPro" id="IPR009061">
    <property type="entry name" value="DNA-bd_dom_put_sf"/>
</dbReference>
<dbReference type="InterPro" id="IPR053905">
    <property type="entry name" value="EF-G-like_DII"/>
</dbReference>
<dbReference type="InterPro" id="IPR004161">
    <property type="entry name" value="EFTu-like_2"/>
</dbReference>
<dbReference type="InterPro" id="IPR013575">
    <property type="entry name" value="IF2_assoc_dom_bac"/>
</dbReference>
<dbReference type="InterPro" id="IPR044145">
    <property type="entry name" value="IF2_II"/>
</dbReference>
<dbReference type="InterPro" id="IPR006847">
    <property type="entry name" value="IF2_N"/>
</dbReference>
<dbReference type="InterPro" id="IPR027417">
    <property type="entry name" value="P-loop_NTPase"/>
</dbReference>
<dbReference type="InterPro" id="IPR005225">
    <property type="entry name" value="Small_GTP-bd"/>
</dbReference>
<dbReference type="InterPro" id="IPR000795">
    <property type="entry name" value="T_Tr_GTP-bd_dom"/>
</dbReference>
<dbReference type="InterPro" id="IPR000178">
    <property type="entry name" value="TF_IF2_bacterial-like"/>
</dbReference>
<dbReference type="InterPro" id="IPR015760">
    <property type="entry name" value="TIF_IF2"/>
</dbReference>
<dbReference type="InterPro" id="IPR023115">
    <property type="entry name" value="TIF_IF2_dom3"/>
</dbReference>
<dbReference type="InterPro" id="IPR036925">
    <property type="entry name" value="TIF_IF2_dom3_sf"/>
</dbReference>
<dbReference type="InterPro" id="IPR009000">
    <property type="entry name" value="Transl_B-barrel_sf"/>
</dbReference>
<dbReference type="NCBIfam" id="TIGR00487">
    <property type="entry name" value="IF-2"/>
    <property type="match status" value="1"/>
</dbReference>
<dbReference type="NCBIfam" id="TIGR00231">
    <property type="entry name" value="small_GTP"/>
    <property type="match status" value="1"/>
</dbReference>
<dbReference type="PANTHER" id="PTHR43381:SF5">
    <property type="entry name" value="TR-TYPE G DOMAIN-CONTAINING PROTEIN"/>
    <property type="match status" value="1"/>
</dbReference>
<dbReference type="PANTHER" id="PTHR43381">
    <property type="entry name" value="TRANSLATION INITIATION FACTOR IF-2-RELATED"/>
    <property type="match status" value="1"/>
</dbReference>
<dbReference type="Pfam" id="PF22042">
    <property type="entry name" value="EF-G_D2"/>
    <property type="match status" value="1"/>
</dbReference>
<dbReference type="Pfam" id="PF00009">
    <property type="entry name" value="GTP_EFTU"/>
    <property type="match status" value="1"/>
</dbReference>
<dbReference type="Pfam" id="PF03144">
    <property type="entry name" value="GTP_EFTU_D2"/>
    <property type="match status" value="1"/>
</dbReference>
<dbReference type="Pfam" id="PF11987">
    <property type="entry name" value="IF-2"/>
    <property type="match status" value="1"/>
</dbReference>
<dbReference type="Pfam" id="PF08364">
    <property type="entry name" value="IF2_assoc"/>
    <property type="match status" value="1"/>
</dbReference>
<dbReference type="Pfam" id="PF04760">
    <property type="entry name" value="IF2_N"/>
    <property type="match status" value="2"/>
</dbReference>
<dbReference type="SUPFAM" id="SSF52156">
    <property type="entry name" value="Initiation factor IF2/eIF5b, domain 3"/>
    <property type="match status" value="1"/>
</dbReference>
<dbReference type="SUPFAM" id="SSF52540">
    <property type="entry name" value="P-loop containing nucleoside triphosphate hydrolases"/>
    <property type="match status" value="1"/>
</dbReference>
<dbReference type="SUPFAM" id="SSF46955">
    <property type="entry name" value="Putative DNA-binding domain"/>
    <property type="match status" value="1"/>
</dbReference>
<dbReference type="SUPFAM" id="SSF50447">
    <property type="entry name" value="Translation proteins"/>
    <property type="match status" value="2"/>
</dbReference>
<dbReference type="PROSITE" id="PS51722">
    <property type="entry name" value="G_TR_2"/>
    <property type="match status" value="1"/>
</dbReference>
<dbReference type="PROSITE" id="PS01176">
    <property type="entry name" value="IF2"/>
    <property type="match status" value="1"/>
</dbReference>
<feature type="chain" id="PRO_0000228204" description="Translation initiation factor IF-2">
    <location>
        <begin position="1"/>
        <end position="896"/>
    </location>
</feature>
<feature type="domain" description="tr-type G">
    <location>
        <begin position="396"/>
        <end position="565"/>
    </location>
</feature>
<feature type="region of interest" description="Disordered" evidence="3">
    <location>
        <begin position="46"/>
        <end position="315"/>
    </location>
</feature>
<feature type="region of interest" description="G1" evidence="1">
    <location>
        <begin position="405"/>
        <end position="412"/>
    </location>
</feature>
<feature type="region of interest" description="G2" evidence="1">
    <location>
        <begin position="430"/>
        <end position="434"/>
    </location>
</feature>
<feature type="region of interest" description="G3" evidence="1">
    <location>
        <begin position="451"/>
        <end position="454"/>
    </location>
</feature>
<feature type="region of interest" description="G4" evidence="1">
    <location>
        <begin position="505"/>
        <end position="508"/>
    </location>
</feature>
<feature type="region of interest" description="G5" evidence="1">
    <location>
        <begin position="541"/>
        <end position="543"/>
    </location>
</feature>
<feature type="compositionally biased region" description="Basic and acidic residues" evidence="3">
    <location>
        <begin position="99"/>
        <end position="247"/>
    </location>
</feature>
<feature type="compositionally biased region" description="Basic residues" evidence="3">
    <location>
        <begin position="269"/>
        <end position="278"/>
    </location>
</feature>
<feature type="compositionally biased region" description="Basic and acidic residues" evidence="3">
    <location>
        <begin position="279"/>
        <end position="288"/>
    </location>
</feature>
<feature type="binding site" evidence="2">
    <location>
        <begin position="405"/>
        <end position="412"/>
    </location>
    <ligand>
        <name>GTP</name>
        <dbReference type="ChEBI" id="CHEBI:37565"/>
    </ligand>
</feature>
<feature type="binding site" evidence="2">
    <location>
        <begin position="451"/>
        <end position="455"/>
    </location>
    <ligand>
        <name>GTP</name>
        <dbReference type="ChEBI" id="CHEBI:37565"/>
    </ligand>
</feature>
<feature type="binding site" evidence="2">
    <location>
        <begin position="505"/>
        <end position="508"/>
    </location>
    <ligand>
        <name>GTP</name>
        <dbReference type="ChEBI" id="CHEBI:37565"/>
    </ligand>
</feature>
<gene>
    <name evidence="2" type="primary">infB</name>
    <name type="ordered locus">IL0968</name>
</gene>
<name>IF2_IDILO</name>
<keyword id="KW-0963">Cytoplasm</keyword>
<keyword id="KW-0342">GTP-binding</keyword>
<keyword id="KW-0396">Initiation factor</keyword>
<keyword id="KW-0547">Nucleotide-binding</keyword>
<keyword id="KW-0648">Protein biosynthesis</keyword>
<keyword id="KW-1185">Reference proteome</keyword>
<organism>
    <name type="scientific">Idiomarina loihiensis (strain ATCC BAA-735 / DSM 15497 / L2-TR)</name>
    <dbReference type="NCBI Taxonomy" id="283942"/>
    <lineage>
        <taxon>Bacteria</taxon>
        <taxon>Pseudomonadati</taxon>
        <taxon>Pseudomonadota</taxon>
        <taxon>Gammaproteobacteria</taxon>
        <taxon>Alteromonadales</taxon>
        <taxon>Idiomarinaceae</taxon>
        <taxon>Idiomarina</taxon>
    </lineage>
</organism>
<comment type="function">
    <text evidence="2">One of the essential components for the initiation of protein synthesis. Protects formylmethionyl-tRNA from spontaneous hydrolysis and promotes its binding to the 30S ribosomal subunits. Also involved in the hydrolysis of GTP during the formation of the 70S ribosomal complex.</text>
</comment>
<comment type="subcellular location">
    <subcellularLocation>
        <location evidence="2">Cytoplasm</location>
    </subcellularLocation>
</comment>
<comment type="similarity">
    <text evidence="2">Belongs to the TRAFAC class translation factor GTPase superfamily. Classic translation factor GTPase family. IF-2 subfamily.</text>
</comment>
<sequence length="896" mass="99178">MEEVTLDKLATDVGTTVDRLVQQFAEAGMTKKAGDSVNEEEKQKLLAHLNRQHGGGGSSEPSKMTLKRKTKSTLSVGGGRDSKSVQVEVRKKRTYVKRSASEEQEREEQERLAQEKEAEEAKLREEEKQREEEQQRKEAEAKAKAEREKAEKEKAEKEKLRKEKEKERQKAEAEKRAAMTPEEREAADKAKADAEKLKRQQEEEARKKAEKEAEAQAEEARKLAEENAKRWEEEEQKRKQQEKEDVHFTTSSTAQEAEDAQDFDEERKSRKRGKKRRRKDEESDDTPRREKRRKGARRGSSLQQGFNKPAQPVERDVKIGETITVGELANRMAVKASDLIKTMMKMGEMVTINQILDQDTAALVVEELGHKPALVKDNALEEEVLSDRQEGGEEAPRAPVVTVMGHVDHGKTSLLDYIRKAKVASGEAGGITQHIGAYHVETGHGMVTFLDTPGHAAFTSMRARGAGATDVVILVVAADDGVMPQTKEAVQHAKAAGVPLVVAINKMDKEGADPDRVKNELSQLEVIPEDWGGDVQFIPLSAHTGEGIDELLEAILLQSEVLDLRAEKTGMASGIVVESRLDRGRGPVATVLVQRGLLKQGDVVLCGLEYGRIRAMRDETGKEIKEAGPSIPVEILGLSGVPQAGDEATVVRDERKAREVANYRQGKYRDVKLAKQQKAKLENMFADMAEGDVAELNIVLKSDVQGSLEAISDALTKLSTDEVKVNIIGSGVGGITETDISLASASNAIVVGFNVRAEAAARKLVEQESVDLRYYSVIYDLIDEVKAAMSGMLQPEFKQQIIGLAEVRDVFKSPKIGAIAGCMVTEGVVKRSAPIRVLRDNVVIYEGELESLRRFKDDVQEVRNGMECGIGVKNYNDVKEGDQIEVFETIQIERTL</sequence>